<comment type="function">
    <text evidence="1">Catalyzes the acyloin condensation reaction between C atoms 2 and 3 of pyruvate and glyceraldehyde 3-phosphate to yield 1-deoxy-D-xylulose-5-phosphate (DXP).</text>
</comment>
<comment type="catalytic activity">
    <reaction evidence="1">
        <text>D-glyceraldehyde 3-phosphate + pyruvate + H(+) = 1-deoxy-D-xylulose 5-phosphate + CO2</text>
        <dbReference type="Rhea" id="RHEA:12605"/>
        <dbReference type="ChEBI" id="CHEBI:15361"/>
        <dbReference type="ChEBI" id="CHEBI:15378"/>
        <dbReference type="ChEBI" id="CHEBI:16526"/>
        <dbReference type="ChEBI" id="CHEBI:57792"/>
        <dbReference type="ChEBI" id="CHEBI:59776"/>
        <dbReference type="EC" id="2.2.1.7"/>
    </reaction>
</comment>
<comment type="cofactor">
    <cofactor evidence="1">
        <name>Mg(2+)</name>
        <dbReference type="ChEBI" id="CHEBI:18420"/>
    </cofactor>
    <text evidence="1">Binds 1 Mg(2+) ion per subunit.</text>
</comment>
<comment type="cofactor">
    <cofactor evidence="1">
        <name>thiamine diphosphate</name>
        <dbReference type="ChEBI" id="CHEBI:58937"/>
    </cofactor>
    <text evidence="1">Binds 1 thiamine pyrophosphate per subunit.</text>
</comment>
<comment type="pathway">
    <text evidence="1">Metabolic intermediate biosynthesis; 1-deoxy-D-xylulose 5-phosphate biosynthesis; 1-deoxy-D-xylulose 5-phosphate from D-glyceraldehyde 3-phosphate and pyruvate: step 1/1.</text>
</comment>
<comment type="subunit">
    <text evidence="1">Homodimer.</text>
</comment>
<comment type="similarity">
    <text evidence="1">Belongs to the transketolase family. DXPS subfamily.</text>
</comment>
<dbReference type="EC" id="2.2.1.7" evidence="1"/>
<dbReference type="EMBL" id="AP009389">
    <property type="protein sequence ID" value="BAF59377.1"/>
    <property type="molecule type" value="Genomic_DNA"/>
</dbReference>
<dbReference type="SMR" id="A5D2Z6"/>
<dbReference type="STRING" id="370438.PTH_1196"/>
<dbReference type="KEGG" id="pth:PTH_1196"/>
<dbReference type="eggNOG" id="COG1154">
    <property type="taxonomic scope" value="Bacteria"/>
</dbReference>
<dbReference type="HOGENOM" id="CLU_009227_1_4_9"/>
<dbReference type="UniPathway" id="UPA00064">
    <property type="reaction ID" value="UER00091"/>
</dbReference>
<dbReference type="Proteomes" id="UP000006556">
    <property type="component" value="Chromosome"/>
</dbReference>
<dbReference type="GO" id="GO:0005829">
    <property type="term" value="C:cytosol"/>
    <property type="evidence" value="ECO:0007669"/>
    <property type="project" value="TreeGrafter"/>
</dbReference>
<dbReference type="GO" id="GO:0008661">
    <property type="term" value="F:1-deoxy-D-xylulose-5-phosphate synthase activity"/>
    <property type="evidence" value="ECO:0007669"/>
    <property type="project" value="UniProtKB-UniRule"/>
</dbReference>
<dbReference type="GO" id="GO:0000287">
    <property type="term" value="F:magnesium ion binding"/>
    <property type="evidence" value="ECO:0007669"/>
    <property type="project" value="UniProtKB-UniRule"/>
</dbReference>
<dbReference type="GO" id="GO:0030976">
    <property type="term" value="F:thiamine pyrophosphate binding"/>
    <property type="evidence" value="ECO:0007669"/>
    <property type="project" value="UniProtKB-UniRule"/>
</dbReference>
<dbReference type="GO" id="GO:0052865">
    <property type="term" value="P:1-deoxy-D-xylulose 5-phosphate biosynthetic process"/>
    <property type="evidence" value="ECO:0007669"/>
    <property type="project" value="UniProtKB-UniPathway"/>
</dbReference>
<dbReference type="GO" id="GO:0019288">
    <property type="term" value="P:isopentenyl diphosphate biosynthetic process, methylerythritol 4-phosphate pathway"/>
    <property type="evidence" value="ECO:0007669"/>
    <property type="project" value="TreeGrafter"/>
</dbReference>
<dbReference type="GO" id="GO:0016114">
    <property type="term" value="P:terpenoid biosynthetic process"/>
    <property type="evidence" value="ECO:0007669"/>
    <property type="project" value="UniProtKB-UniRule"/>
</dbReference>
<dbReference type="GO" id="GO:0009228">
    <property type="term" value="P:thiamine biosynthetic process"/>
    <property type="evidence" value="ECO:0007669"/>
    <property type="project" value="UniProtKB-UniRule"/>
</dbReference>
<dbReference type="CDD" id="cd02007">
    <property type="entry name" value="TPP_DXS"/>
    <property type="match status" value="1"/>
</dbReference>
<dbReference type="CDD" id="cd07033">
    <property type="entry name" value="TPP_PYR_DXS_TK_like"/>
    <property type="match status" value="1"/>
</dbReference>
<dbReference type="FunFam" id="3.40.50.920:FF:000002">
    <property type="entry name" value="1-deoxy-D-xylulose-5-phosphate synthase"/>
    <property type="match status" value="1"/>
</dbReference>
<dbReference type="FunFam" id="3.40.50.970:FF:000005">
    <property type="entry name" value="1-deoxy-D-xylulose-5-phosphate synthase"/>
    <property type="match status" value="1"/>
</dbReference>
<dbReference type="Gene3D" id="3.40.50.920">
    <property type="match status" value="1"/>
</dbReference>
<dbReference type="Gene3D" id="3.40.50.970">
    <property type="match status" value="2"/>
</dbReference>
<dbReference type="HAMAP" id="MF_00315">
    <property type="entry name" value="DXP_synth"/>
    <property type="match status" value="1"/>
</dbReference>
<dbReference type="InterPro" id="IPR005477">
    <property type="entry name" value="Dxylulose-5-P_synthase"/>
</dbReference>
<dbReference type="InterPro" id="IPR029061">
    <property type="entry name" value="THDP-binding"/>
</dbReference>
<dbReference type="InterPro" id="IPR009014">
    <property type="entry name" value="Transketo_C/PFOR_II"/>
</dbReference>
<dbReference type="InterPro" id="IPR005475">
    <property type="entry name" value="Transketolase-like_Pyr-bd"/>
</dbReference>
<dbReference type="InterPro" id="IPR020826">
    <property type="entry name" value="Transketolase_BS"/>
</dbReference>
<dbReference type="InterPro" id="IPR033248">
    <property type="entry name" value="Transketolase_C"/>
</dbReference>
<dbReference type="InterPro" id="IPR049557">
    <property type="entry name" value="Transketolase_CS"/>
</dbReference>
<dbReference type="NCBIfam" id="TIGR00204">
    <property type="entry name" value="dxs"/>
    <property type="match status" value="1"/>
</dbReference>
<dbReference type="NCBIfam" id="NF003933">
    <property type="entry name" value="PRK05444.2-2"/>
    <property type="match status" value="1"/>
</dbReference>
<dbReference type="PANTHER" id="PTHR43322">
    <property type="entry name" value="1-D-DEOXYXYLULOSE 5-PHOSPHATE SYNTHASE-RELATED"/>
    <property type="match status" value="1"/>
</dbReference>
<dbReference type="PANTHER" id="PTHR43322:SF5">
    <property type="entry name" value="1-DEOXY-D-XYLULOSE-5-PHOSPHATE SYNTHASE, CHLOROPLASTIC"/>
    <property type="match status" value="1"/>
</dbReference>
<dbReference type="Pfam" id="PF13292">
    <property type="entry name" value="DXP_synthase_N"/>
    <property type="match status" value="1"/>
</dbReference>
<dbReference type="Pfam" id="PF02779">
    <property type="entry name" value="Transket_pyr"/>
    <property type="match status" value="1"/>
</dbReference>
<dbReference type="Pfam" id="PF02780">
    <property type="entry name" value="Transketolase_C"/>
    <property type="match status" value="1"/>
</dbReference>
<dbReference type="SMART" id="SM00861">
    <property type="entry name" value="Transket_pyr"/>
    <property type="match status" value="1"/>
</dbReference>
<dbReference type="SUPFAM" id="SSF52518">
    <property type="entry name" value="Thiamin diphosphate-binding fold (THDP-binding)"/>
    <property type="match status" value="2"/>
</dbReference>
<dbReference type="SUPFAM" id="SSF52922">
    <property type="entry name" value="TK C-terminal domain-like"/>
    <property type="match status" value="1"/>
</dbReference>
<dbReference type="PROSITE" id="PS00801">
    <property type="entry name" value="TRANSKETOLASE_1"/>
    <property type="match status" value="1"/>
</dbReference>
<dbReference type="PROSITE" id="PS00802">
    <property type="entry name" value="TRANSKETOLASE_2"/>
    <property type="match status" value="1"/>
</dbReference>
<organism>
    <name type="scientific">Pelotomaculum thermopropionicum (strain DSM 13744 / JCM 10971 / SI)</name>
    <dbReference type="NCBI Taxonomy" id="370438"/>
    <lineage>
        <taxon>Bacteria</taxon>
        <taxon>Bacillati</taxon>
        <taxon>Bacillota</taxon>
        <taxon>Clostridia</taxon>
        <taxon>Eubacteriales</taxon>
        <taxon>Desulfotomaculaceae</taxon>
        <taxon>Pelotomaculum</taxon>
    </lineage>
</organism>
<feature type="chain" id="PRO_1000079096" description="1-deoxy-D-xylulose-5-phosphate synthase">
    <location>
        <begin position="1"/>
        <end position="637"/>
    </location>
</feature>
<feature type="binding site" evidence="1">
    <location>
        <position position="74"/>
    </location>
    <ligand>
        <name>thiamine diphosphate</name>
        <dbReference type="ChEBI" id="CHEBI:58937"/>
    </ligand>
</feature>
<feature type="binding site" evidence="1">
    <location>
        <begin position="115"/>
        <end position="117"/>
    </location>
    <ligand>
        <name>thiamine diphosphate</name>
        <dbReference type="ChEBI" id="CHEBI:58937"/>
    </ligand>
</feature>
<feature type="binding site" evidence="1">
    <location>
        <position position="146"/>
    </location>
    <ligand>
        <name>Mg(2+)</name>
        <dbReference type="ChEBI" id="CHEBI:18420"/>
    </ligand>
</feature>
<feature type="binding site" evidence="1">
    <location>
        <begin position="147"/>
        <end position="148"/>
    </location>
    <ligand>
        <name>thiamine diphosphate</name>
        <dbReference type="ChEBI" id="CHEBI:58937"/>
    </ligand>
</feature>
<feature type="binding site" evidence="1">
    <location>
        <position position="175"/>
    </location>
    <ligand>
        <name>Mg(2+)</name>
        <dbReference type="ChEBI" id="CHEBI:18420"/>
    </ligand>
</feature>
<feature type="binding site" evidence="1">
    <location>
        <position position="175"/>
    </location>
    <ligand>
        <name>thiamine diphosphate</name>
        <dbReference type="ChEBI" id="CHEBI:58937"/>
    </ligand>
</feature>
<feature type="binding site" evidence="1">
    <location>
        <position position="285"/>
    </location>
    <ligand>
        <name>thiamine diphosphate</name>
        <dbReference type="ChEBI" id="CHEBI:58937"/>
    </ligand>
</feature>
<feature type="binding site" evidence="1">
    <location>
        <position position="366"/>
    </location>
    <ligand>
        <name>thiamine diphosphate</name>
        <dbReference type="ChEBI" id="CHEBI:58937"/>
    </ligand>
</feature>
<proteinExistence type="inferred from homology"/>
<keyword id="KW-0414">Isoprene biosynthesis</keyword>
<keyword id="KW-0460">Magnesium</keyword>
<keyword id="KW-0479">Metal-binding</keyword>
<keyword id="KW-1185">Reference proteome</keyword>
<keyword id="KW-0784">Thiamine biosynthesis</keyword>
<keyword id="KW-0786">Thiamine pyrophosphate</keyword>
<keyword id="KW-0808">Transferase</keyword>
<reference key="1">
    <citation type="journal article" date="2008" name="Genome Res.">
        <title>The genome of Pelotomaculum thermopropionicum reveals niche-associated evolution in anaerobic microbiota.</title>
        <authorList>
            <person name="Kosaka T."/>
            <person name="Kato S."/>
            <person name="Shimoyama T."/>
            <person name="Ishii S."/>
            <person name="Abe T."/>
            <person name="Watanabe K."/>
        </authorList>
    </citation>
    <scope>NUCLEOTIDE SEQUENCE [LARGE SCALE GENOMIC DNA]</scope>
    <source>
        <strain>DSM 13744 / JCM 10971 / SI</strain>
    </source>
</reference>
<accession>A5D2Z6</accession>
<sequence length="637" mass="69583">MGRLLEQISSSRDIRSLTFKQLNELAGEIRQVLINTVSKTGGHLAPNLGVVELTLGLHRVFHSPVDKIIWDVGHQSYVHKLITGRYKEFYTLRQFGGISGFPRPSESVHDAFGTGHSSTSISAALGMAIARDLKGEKYSVVAVIGDGAMTGGIAFEALNHAGHLKCNLIVVLNDNEMSIAQNVGAMSGYLTRLRTDPMYSRGKEEIEQLLRRIPIGSALLRLGERVKDSLKYLVVPGMIFEELGFTYLGPVDGHDLRAITTVLQHARARKGPVLVHVLTKKGKGYSPAESNPDRFHGIGAFDVATGEAVKKSNIPTYTEVFGRTMVKLAREFDNMLAITAAMTGGTGLTEFARLYPKRFFDVGIAEQHAVTLAAGMATGGFRPVVAIYSTFLQRAYDQILHDVCLQNLPVTFAIDRAGIVGEDGATHHGLFDFSYLRPIPNMVIMAPKDENELQHMLYTALSHPGPAAVRYPRSAGTGCRMDDSFKIIPLGRAEVLRDGTEVTLLAVGSMVCLAVKAAEILAGHGIDAAVINARFVKPLDKECILRYARRTREVFTLEENVLQGGFGSAVQELLSSCGERGVSVHCFGIPDSFVEHGNRALLLARYGLTVEQVVRAVLERFAQRRHPKKLKVVSEKA</sequence>
<gene>
    <name evidence="1" type="primary">dxs</name>
    <name type="ordered locus">PTH_1196</name>
</gene>
<protein>
    <recommendedName>
        <fullName evidence="1">1-deoxy-D-xylulose-5-phosphate synthase</fullName>
        <ecNumber evidence="1">2.2.1.7</ecNumber>
    </recommendedName>
    <alternativeName>
        <fullName evidence="1">1-deoxyxylulose-5-phosphate synthase</fullName>
        <shortName evidence="1">DXP synthase</shortName>
        <shortName evidence="1">DXPS</shortName>
    </alternativeName>
</protein>
<name>DXS_PELTS</name>
<evidence type="ECO:0000255" key="1">
    <source>
        <dbReference type="HAMAP-Rule" id="MF_00315"/>
    </source>
</evidence>